<sequence>MDNSSRLFSPLRLGKCQLRHRVAMSPLTRFRADDLSVQMPFAKEYYAQRASVPGTFLVSEATSISRESVGFSNVPGIWNAEQVRAWKEIADDVHCKGSFLFLQLWATGRSATPERLQSGDFDFASSSAVPMEPGGAVPRELTEEDIHDLIARFAEAARRAIDAGMDGIELHAANGYLIDQFTQASCNQRTDRWGGSIENRARFAIEVTRSVVAAVGADRVGVKLSPWGKIQGMGTMQDLVPQFQYLVSELRDMGLAYLRLSNSRWIDGVPQEEEDNSIYVHTWGASRPVLLEGGYDPISAQKEADIRFNGYDAVIAFGRFFISNPDLPFRIKAGVDLQKYNRDTFYTPISEKGYIDYPFSTAFLEEHSSKASLKL</sequence>
<comment type="function">
    <text evidence="3">Aldehyde reductase; part of the gene cluster that mediates the biosynthesis of the alkaloid (-)-FR901483, a potent immunosuppressant that shows efficacy in animal models and a probable inhibitor of purine nucleotide biosynthesis by targeting phosphoribosylpyrophosphate amidotransferase (PPAT) (PubMed:33372776). Within the pathway, FrzD reduces the dienone portion of the pathway intermediates to cyclohexanone (PubMed:33372776). The biosynthesis of (-)-FR901483 starts with the condensation of two L-tyrosines to yield (S,S)-dityrosyl-piperazine. This process occurs in 3 steps with the non-canonical nonribosomal peptide synthetase FrzA catalyzing the reduction of L-tyrosine into L-tyrosinal, the spontaneous condensation of 2 L-tyrosinal units, and the subsequent reduction by the NmrA-like family domain-containing oxidoreductase FrzB. The cytochrome P450 monooxygenase FrzC then performs coupling between N10 and C1' to morph the piperazine into a 1,4-diazabicyclo[3.2.1]octane spiro-fused to a 2,5-cyclohexadienone. The dienone portion is further reduced to cyclohexanone by the flavin-dependent reductase FrzD. The methyltranserases (MTs) FrzE and FrzF are then involved in the methylation at the C10' amine and the C4 phenolic oxygen, respectively. The order of the two MTs appear to be interchangeable. Cleavage of the C9-N10' bond by the dioxygenase FrzG then leads to formation of a conjugated iminium. In addition to the oxidation of C9, an additional dehydrogenation between C7 and C8 can occur to give a likely shunt product. The next biosynthetic step is the intramolecular aldol condensation catalyzed by the newly identified aldolase FrzH to yield an aza-tricyclic product with the formation of a C9-C3' bond (PubMed:33372776). The short-chain dehydrogenase/reductase FrzI then produces dephospho-(-)-FR901483 that is phosphorylated at C4'-OH into (-)-FR901483 by the phosphotransferase FrzJ (PubMed:33372776). The only unassigned enzyme in the cluster is the second cytochrome P450 monooxygenase FrzL (PubMed:33372776).</text>
</comment>
<comment type="catalytic activity">
    <reaction evidence="3">
        <text>(1S,4S)-4-[(4-hydroxyphenyl)methyl]-2,5-diazaspiro[bicyclo[3.2.1]octane-6,1'-cyclohexane]-2',5'-dien-4'-one + 2 NADPH + 2 H(+) = (1S,4S)-4-[(4-hydroxyphenyl)methyl]-2,5-diazaspiro[bicyclo[3.2.1]octane-6,1'-cyclohexan]-4'-one + 2 NADP(+)</text>
        <dbReference type="Rhea" id="RHEA:83583"/>
        <dbReference type="ChEBI" id="CHEBI:15378"/>
        <dbReference type="ChEBI" id="CHEBI:57783"/>
        <dbReference type="ChEBI" id="CHEBI:58349"/>
        <dbReference type="ChEBI" id="CHEBI:233174"/>
        <dbReference type="ChEBI" id="CHEBI:233175"/>
    </reaction>
    <physiologicalReaction direction="left-to-right" evidence="3">
        <dbReference type="Rhea" id="RHEA:83584"/>
    </physiologicalReaction>
</comment>
<comment type="cofactor">
    <cofactor evidence="2">
        <name>FMN</name>
        <dbReference type="ChEBI" id="CHEBI:58210"/>
    </cofactor>
</comment>
<comment type="pathway">
    <text evidence="3">Alkaloid biosynthesis; ergot alkaloid biosynthesis.</text>
</comment>
<comment type="similarity">
    <text evidence="5">Belongs to the NADH:flavin oxidoreductase/NADH oxidase family.</text>
</comment>
<feature type="chain" id="PRO_0000462332" description="Aldehyde reductase FrzD">
    <location>
        <begin position="1"/>
        <end position="375"/>
    </location>
</feature>
<feature type="active site" description="Proton donor" evidence="2">
    <location>
        <position position="176"/>
    </location>
</feature>
<feature type="binding site" evidence="2">
    <location>
        <position position="61"/>
    </location>
    <ligand>
        <name>FMN</name>
        <dbReference type="ChEBI" id="CHEBI:58210"/>
    </ligand>
</feature>
<feature type="binding site" evidence="2">
    <location>
        <position position="103"/>
    </location>
    <ligand>
        <name>FMN</name>
        <dbReference type="ChEBI" id="CHEBI:58210"/>
    </ligand>
</feature>
<feature type="binding site" evidence="2">
    <location>
        <position position="171"/>
    </location>
    <ligand>
        <name>FMN</name>
        <dbReference type="ChEBI" id="CHEBI:58210"/>
    </ligand>
</feature>
<feature type="binding site" evidence="2">
    <location>
        <position position="223"/>
    </location>
    <ligand>
        <name>FMN</name>
        <dbReference type="ChEBI" id="CHEBI:58210"/>
    </ligand>
</feature>
<feature type="binding site" evidence="2">
    <location>
        <position position="294"/>
    </location>
    <ligand>
        <name>FMN</name>
        <dbReference type="ChEBI" id="CHEBI:58210"/>
    </ligand>
</feature>
<feature type="binding site" evidence="1">
    <location>
        <position position="319"/>
    </location>
    <ligand>
        <name>FMN</name>
        <dbReference type="ChEBI" id="CHEBI:58210"/>
    </ligand>
</feature>
<keyword id="KW-0285">Flavoprotein</keyword>
<keyword id="KW-0288">FMN</keyword>
<keyword id="KW-0521">NADP</keyword>
<keyword id="KW-0560">Oxidoreductase</keyword>
<name>FRZD_CLASX</name>
<organism>
    <name type="scientific">Cladobotryum sp</name>
    <dbReference type="NCBI Taxonomy" id="2040732"/>
    <lineage>
        <taxon>Eukaryota</taxon>
        <taxon>Fungi</taxon>
        <taxon>Dikarya</taxon>
        <taxon>Ascomycota</taxon>
        <taxon>Pezizomycotina</taxon>
        <taxon>Sordariomycetes</taxon>
        <taxon>Hypocreomycetidae</taxon>
        <taxon>Hypocreales</taxon>
        <taxon>Hypocreaceae</taxon>
        <taxon>Cladobotryum</taxon>
    </lineage>
</organism>
<protein>
    <recommendedName>
        <fullName evidence="4">Aldehyde reductase FrzD</fullName>
        <ecNumber evidence="3">1.3.1.-</ecNumber>
    </recommendedName>
    <alternativeName>
        <fullName evidence="4">FR901483 biosynthesis cluster protein D</fullName>
    </alternativeName>
    <alternativeName>
        <fullName evidence="4">Flavin-dependent old-yellow enzyme FrzD</fullName>
        <shortName evidence="4">Flavin-dependent OYE</shortName>
    </alternativeName>
</protein>
<dbReference type="EC" id="1.3.1.-" evidence="3"/>
<dbReference type="EMBL" id="MW322046">
    <property type="protein sequence ID" value="QQO98483.1"/>
    <property type="molecule type" value="Genomic_DNA"/>
</dbReference>
<dbReference type="UniPathway" id="UPA00327"/>
<dbReference type="GO" id="GO:0010181">
    <property type="term" value="F:FMN binding"/>
    <property type="evidence" value="ECO:0007669"/>
    <property type="project" value="InterPro"/>
</dbReference>
<dbReference type="GO" id="GO:0003959">
    <property type="term" value="F:NADPH dehydrogenase activity"/>
    <property type="evidence" value="ECO:0007669"/>
    <property type="project" value="TreeGrafter"/>
</dbReference>
<dbReference type="CDD" id="cd02933">
    <property type="entry name" value="OYE_like_FMN"/>
    <property type="match status" value="1"/>
</dbReference>
<dbReference type="FunFam" id="3.20.20.70:FF:000138">
    <property type="entry name" value="NADPH dehydrogenase 1"/>
    <property type="match status" value="1"/>
</dbReference>
<dbReference type="Gene3D" id="3.20.20.70">
    <property type="entry name" value="Aldolase class I"/>
    <property type="match status" value="1"/>
</dbReference>
<dbReference type="InterPro" id="IPR013785">
    <property type="entry name" value="Aldolase_TIM"/>
</dbReference>
<dbReference type="InterPro" id="IPR001155">
    <property type="entry name" value="OxRdtase_FMN_N"/>
</dbReference>
<dbReference type="InterPro" id="IPR045247">
    <property type="entry name" value="Oye-like"/>
</dbReference>
<dbReference type="PANTHER" id="PTHR22893">
    <property type="entry name" value="NADH OXIDOREDUCTASE-RELATED"/>
    <property type="match status" value="1"/>
</dbReference>
<dbReference type="PANTHER" id="PTHR22893:SF91">
    <property type="entry name" value="NADPH DEHYDROGENASE 2-RELATED"/>
    <property type="match status" value="1"/>
</dbReference>
<dbReference type="Pfam" id="PF00724">
    <property type="entry name" value="Oxidored_FMN"/>
    <property type="match status" value="1"/>
</dbReference>
<dbReference type="SUPFAM" id="SSF51395">
    <property type="entry name" value="FMN-linked oxidoreductases"/>
    <property type="match status" value="1"/>
</dbReference>
<accession>A0A7T8F1M9</accession>
<proteinExistence type="evidence at protein level"/>
<reference key="1">
    <citation type="journal article" date="2021" name="J. Am. Chem. Soc.">
        <title>Biosynthesis of the Immunosuppressant (-)-FR901483.</title>
        <authorList>
            <person name="Zhang Z."/>
            <person name="Tamura Y."/>
            <person name="Tang M."/>
            <person name="Qiao T."/>
            <person name="Sato M."/>
            <person name="Otsu Y."/>
            <person name="Sasamura S."/>
            <person name="Taniguchi M."/>
            <person name="Watanabe K."/>
            <person name="Tang Y."/>
        </authorList>
    </citation>
    <scope>NUCLEOTIDE SEQUENCE [GENOMIC DNA]</scope>
    <scope>FUNCTION</scope>
    <scope>CATALYTIC ACTIVITY</scope>
    <scope>PATHWAY</scope>
    <source>
        <strain>11231</strain>
    </source>
</reference>
<evidence type="ECO:0000250" key="1">
    <source>
        <dbReference type="UniProtKB" id="Q02899"/>
    </source>
</evidence>
<evidence type="ECO:0000250" key="2">
    <source>
        <dbReference type="UniProtKB" id="Q4WZ70"/>
    </source>
</evidence>
<evidence type="ECO:0000269" key="3">
    <source>
    </source>
</evidence>
<evidence type="ECO:0000303" key="4">
    <source>
    </source>
</evidence>
<evidence type="ECO:0000305" key="5"/>
<gene>
    <name evidence="4" type="primary">FrzD</name>
</gene>